<comment type="miscellaneous">
    <text>The sequence of the light chain of this IgM myeloma protein has also been determined.</text>
</comment>
<comment type="miscellaneous">
    <text>This protein binds dextran.</text>
</comment>
<organism>
    <name type="scientific">Mus musculus</name>
    <name type="common">Mouse</name>
    <dbReference type="NCBI Taxonomy" id="10090"/>
    <lineage>
        <taxon>Eukaryota</taxon>
        <taxon>Metazoa</taxon>
        <taxon>Chordata</taxon>
        <taxon>Craniata</taxon>
        <taxon>Vertebrata</taxon>
        <taxon>Euteleostomi</taxon>
        <taxon>Mammalia</taxon>
        <taxon>Eutheria</taxon>
        <taxon>Euarchontoglires</taxon>
        <taxon>Glires</taxon>
        <taxon>Rodentia</taxon>
        <taxon>Myomorpha</taxon>
        <taxon>Muroidea</taxon>
        <taxon>Muridae</taxon>
        <taxon>Murinae</taxon>
        <taxon>Mus</taxon>
        <taxon>Mus</taxon>
    </lineage>
</organism>
<reference key="1">
    <citation type="journal article" date="1982" name="Biochemistry">
        <title>Complete amino acid sequence of a mouse mu chain: homology among heavy chain constant region domains.</title>
        <authorList>
            <person name="Kehry M.R."/>
            <person name="Fuhrman J.S."/>
            <person name="Schilling J.W."/>
            <person name="Rogers J."/>
            <person name="Sibley C.H."/>
            <person name="Hood L.E."/>
        </authorList>
    </citation>
    <scope>PROTEIN SEQUENCE</scope>
    <scope>GLYCOSYLATION AT ASN-55</scope>
</reference>
<accession>P01756</accession>
<dbReference type="PIR" id="A02039">
    <property type="entry name" value="MHMS4E"/>
</dbReference>
<dbReference type="PDB" id="3BQU">
    <property type="method" value="X-ray"/>
    <property type="resolution" value="3.00 A"/>
    <property type="chains" value="D=2-98"/>
</dbReference>
<dbReference type="PDBsum" id="3BQU"/>
<dbReference type="SMR" id="P01756"/>
<dbReference type="FunCoup" id="P01756">
    <property type="interactions" value="514"/>
</dbReference>
<dbReference type="GlyGen" id="P01756">
    <property type="glycosylation" value="1 site"/>
</dbReference>
<dbReference type="iPTMnet" id="P01756"/>
<dbReference type="jPOST" id="P01756"/>
<dbReference type="PeptideAtlas" id="P01756"/>
<dbReference type="InParanoid" id="P01756"/>
<dbReference type="EvolutionaryTrace" id="P01756"/>
<dbReference type="Proteomes" id="UP000000589">
    <property type="component" value="Unplaced"/>
</dbReference>
<dbReference type="RNAct" id="P01756">
    <property type="molecule type" value="protein"/>
</dbReference>
<dbReference type="GO" id="GO:0005576">
    <property type="term" value="C:extracellular region"/>
    <property type="evidence" value="ECO:0007669"/>
    <property type="project" value="UniProtKB-ARBA"/>
</dbReference>
<dbReference type="GO" id="GO:0019814">
    <property type="term" value="C:immunoglobulin complex"/>
    <property type="evidence" value="ECO:0007669"/>
    <property type="project" value="UniProtKB-KW"/>
</dbReference>
<dbReference type="GO" id="GO:0003823">
    <property type="term" value="F:antigen binding"/>
    <property type="evidence" value="ECO:0000318"/>
    <property type="project" value="GO_Central"/>
</dbReference>
<dbReference type="GO" id="GO:0016064">
    <property type="term" value="P:immunoglobulin mediated immune response"/>
    <property type="evidence" value="ECO:0000318"/>
    <property type="project" value="GO_Central"/>
</dbReference>
<dbReference type="CDD" id="cd04981">
    <property type="entry name" value="IgV_H"/>
    <property type="match status" value="1"/>
</dbReference>
<dbReference type="FunFam" id="2.60.40.10:FF:001025">
    <property type="entry name" value="Immunoglobulin heavy variable V1-74"/>
    <property type="match status" value="1"/>
</dbReference>
<dbReference type="Gene3D" id="2.60.40.10">
    <property type="entry name" value="Immunoglobulins"/>
    <property type="match status" value="1"/>
</dbReference>
<dbReference type="InterPro" id="IPR007110">
    <property type="entry name" value="Ig-like_dom"/>
</dbReference>
<dbReference type="InterPro" id="IPR036179">
    <property type="entry name" value="Ig-like_dom_sf"/>
</dbReference>
<dbReference type="InterPro" id="IPR013783">
    <property type="entry name" value="Ig-like_fold"/>
</dbReference>
<dbReference type="InterPro" id="IPR003599">
    <property type="entry name" value="Ig_sub"/>
</dbReference>
<dbReference type="InterPro" id="IPR013106">
    <property type="entry name" value="Ig_V-set"/>
</dbReference>
<dbReference type="InterPro" id="IPR050199">
    <property type="entry name" value="IgHV"/>
</dbReference>
<dbReference type="PANTHER" id="PTHR23266">
    <property type="entry name" value="IMMUNOGLOBULIN HEAVY CHAIN"/>
    <property type="match status" value="1"/>
</dbReference>
<dbReference type="Pfam" id="PF07686">
    <property type="entry name" value="V-set"/>
    <property type="match status" value="1"/>
</dbReference>
<dbReference type="SMART" id="SM00409">
    <property type="entry name" value="IG"/>
    <property type="match status" value="1"/>
</dbReference>
<dbReference type="SMART" id="SM00406">
    <property type="entry name" value="IGv"/>
    <property type="match status" value="1"/>
</dbReference>
<dbReference type="SUPFAM" id="SSF48726">
    <property type="entry name" value="Immunoglobulin"/>
    <property type="match status" value="1"/>
</dbReference>
<dbReference type="PROSITE" id="PS50835">
    <property type="entry name" value="IG_LIKE"/>
    <property type="match status" value="1"/>
</dbReference>
<sequence>EVQLQQSGPELVKPGASVKMSCKASGYTFTDYYMKWVKQSHGKSLEWIGDINPNNGGTSYNQKFKGKATLTVDKSSSTAYMQLNSLTSEDSAVYYCARDYDWYFDVWGAGTTVTVSS</sequence>
<protein>
    <recommendedName>
        <fullName>Ig heavy chain V region MOPC 104E</fullName>
    </recommendedName>
</protein>
<name>HVM12_MOUSE</name>
<feature type="chain" id="PRO_0000059870" description="Ig heavy chain V region MOPC 104E">
    <location>
        <begin position="1"/>
        <end position="117" status="greater than"/>
    </location>
</feature>
<feature type="domain" description="Ig-like">
    <location>
        <begin position="1"/>
        <end position="116"/>
    </location>
</feature>
<feature type="glycosylation site" description="N-linked (GlcNAc...) (high mannose) asparagine; atypical" evidence="2">
    <location>
        <position position="55"/>
    </location>
</feature>
<feature type="disulfide bond" evidence="1">
    <location>
        <begin position="22"/>
        <end position="96"/>
    </location>
</feature>
<feature type="non-terminal residue">
    <location>
        <position position="117"/>
    </location>
</feature>
<feature type="strand" evidence="3">
    <location>
        <begin position="4"/>
        <end position="6"/>
    </location>
</feature>
<feature type="strand" evidence="3">
    <location>
        <begin position="10"/>
        <end position="12"/>
    </location>
</feature>
<feature type="strand" evidence="3">
    <location>
        <begin position="18"/>
        <end position="23"/>
    </location>
</feature>
<feature type="helix" evidence="3">
    <location>
        <begin position="29"/>
        <end position="31"/>
    </location>
</feature>
<feature type="strand" evidence="3">
    <location>
        <begin position="34"/>
        <end position="40"/>
    </location>
</feature>
<feature type="strand" evidence="3">
    <location>
        <begin position="46"/>
        <end position="51"/>
    </location>
</feature>
<feature type="strand" evidence="3">
    <location>
        <begin position="53"/>
        <end position="55"/>
    </location>
</feature>
<feature type="strand" evidence="3">
    <location>
        <begin position="58"/>
        <end position="60"/>
    </location>
</feature>
<feature type="turn" evidence="3">
    <location>
        <begin position="62"/>
        <end position="67"/>
    </location>
</feature>
<feature type="strand" evidence="3">
    <location>
        <begin position="68"/>
        <end position="73"/>
    </location>
</feature>
<feature type="helix" evidence="3">
    <location>
        <begin position="74"/>
        <end position="76"/>
    </location>
</feature>
<feature type="strand" evidence="3">
    <location>
        <begin position="78"/>
        <end position="83"/>
    </location>
</feature>
<feature type="helix" evidence="3">
    <location>
        <begin position="88"/>
        <end position="90"/>
    </location>
</feature>
<feature type="strand" evidence="3">
    <location>
        <begin position="92"/>
        <end position="98"/>
    </location>
</feature>
<feature type="turn" evidence="3">
    <location>
        <begin position="101"/>
        <end position="103"/>
    </location>
</feature>
<feature type="strand" evidence="3">
    <location>
        <begin position="105"/>
        <end position="108"/>
    </location>
</feature>
<feature type="strand" evidence="3">
    <location>
        <begin position="111"/>
        <end position="115"/>
    </location>
</feature>
<keyword id="KW-0002">3D-structure</keyword>
<keyword id="KW-1064">Adaptive immunity</keyword>
<keyword id="KW-0903">Direct protein sequencing</keyword>
<keyword id="KW-1015">Disulfide bond</keyword>
<keyword id="KW-0325">Glycoprotein</keyword>
<keyword id="KW-0391">Immunity</keyword>
<keyword id="KW-1280">Immunoglobulin</keyword>
<keyword id="KW-1185">Reference proteome</keyword>
<evidence type="ECO:0000255" key="1">
    <source>
        <dbReference type="PROSITE-ProRule" id="PRU00114"/>
    </source>
</evidence>
<evidence type="ECO:0000269" key="2">
    <source>
    </source>
</evidence>
<evidence type="ECO:0007829" key="3">
    <source>
        <dbReference type="PDB" id="3BQU"/>
    </source>
</evidence>
<proteinExistence type="evidence at protein level"/>